<name>DEOK_SALTY</name>
<reference key="1">
    <citation type="journal article" date="2001" name="Nature">
        <title>Complete genome sequence of Salmonella enterica serovar Typhimurium LT2.</title>
        <authorList>
            <person name="McClelland M."/>
            <person name="Sanderson K.E."/>
            <person name="Spieth J."/>
            <person name="Clifton S.W."/>
            <person name="Latreille P."/>
            <person name="Courtney L."/>
            <person name="Porwollik S."/>
            <person name="Ali J."/>
            <person name="Dante M."/>
            <person name="Du F."/>
            <person name="Hou S."/>
            <person name="Layman D."/>
            <person name="Leonard S."/>
            <person name="Nguyen C."/>
            <person name="Scott K."/>
            <person name="Holmes A."/>
            <person name="Grewal N."/>
            <person name="Mulvaney E."/>
            <person name="Ryan E."/>
            <person name="Sun H."/>
            <person name="Florea L."/>
            <person name="Miller W."/>
            <person name="Stoneking T."/>
            <person name="Nhan M."/>
            <person name="Waterston R."/>
            <person name="Wilson R.K."/>
        </authorList>
    </citation>
    <scope>NUCLEOTIDE SEQUENCE [LARGE SCALE GENOMIC DNA]</scope>
    <source>
        <strain>LT2 / SGSC1412 / ATCC 700720</strain>
    </source>
</reference>
<reference key="2">
    <citation type="journal article" date="1974" name="Arch. Biochem. Biophys.">
        <title>Deoxyribokinase from Salmonella typhimurium. Purification and properties.</title>
        <authorList>
            <person name="Schimmel S.D."/>
            <person name="Hoffee P."/>
            <person name="Horecker B.L."/>
        </authorList>
    </citation>
    <scope>FUNCTION</scope>
    <scope>CATALYTIC ACTIVITY</scope>
    <scope>COFACTOR</scope>
    <scope>ACTIVITY REGULATION</scope>
    <scope>BIOPHYSICOCHEMICAL PROPERTIES</scope>
    <scope>SUBUNIT</scope>
    <scope>INDUCTION</scope>
    <source>
        <strain>G-30 / LT2</strain>
    </source>
</reference>
<reference key="3">
    <citation type="journal article" date="2003" name="J. Bacteriol.">
        <title>Regulation of expression of the 2-deoxy-D-ribose utilization regulon, deoQKPX, from Salmonella enterica serovar typhimurium.</title>
        <authorList>
            <person name="Christensen M."/>
            <person name="Borza T."/>
            <person name="Dandanell G."/>
            <person name="Gilles A.M."/>
            <person name="Barzu O."/>
            <person name="Kelln R.A."/>
            <person name="Neuhard J."/>
        </authorList>
    </citation>
    <scope>TRANSCRIPTIONAL REGULATION</scope>
</reference>
<organism>
    <name type="scientific">Salmonella typhimurium (strain LT2 / SGSC1412 / ATCC 700720)</name>
    <dbReference type="NCBI Taxonomy" id="99287"/>
    <lineage>
        <taxon>Bacteria</taxon>
        <taxon>Pseudomonadati</taxon>
        <taxon>Pseudomonadota</taxon>
        <taxon>Gammaproteobacteria</taxon>
        <taxon>Enterobacterales</taxon>
        <taxon>Enterobacteriaceae</taxon>
        <taxon>Salmonella</taxon>
    </lineage>
</organism>
<gene>
    <name evidence="2 5" type="primary">deoK</name>
    <name evidence="7" type="ordered locus">STM3793</name>
</gene>
<dbReference type="EC" id="2.7.1.229" evidence="2 4"/>
<dbReference type="EMBL" id="AE006468">
    <property type="protein sequence ID" value="AAL22651.1"/>
    <property type="molecule type" value="Genomic_DNA"/>
</dbReference>
<dbReference type="RefSeq" id="NP_462692.1">
    <property type="nucleotide sequence ID" value="NC_003197.2"/>
</dbReference>
<dbReference type="SMR" id="Q7CPF5"/>
<dbReference type="STRING" id="99287.STM3793"/>
<dbReference type="PaxDb" id="99287-STM3793"/>
<dbReference type="GeneID" id="1255317"/>
<dbReference type="KEGG" id="stm:STM3793"/>
<dbReference type="PATRIC" id="fig|99287.12.peg.4013"/>
<dbReference type="HOGENOM" id="CLU_027634_2_0_6"/>
<dbReference type="OMA" id="CFARHYV"/>
<dbReference type="PhylomeDB" id="Q7CPF5"/>
<dbReference type="BioCyc" id="SENT99287:STM3793-MONOMER"/>
<dbReference type="Proteomes" id="UP000001014">
    <property type="component" value="Chromosome"/>
</dbReference>
<dbReference type="GO" id="GO:0005829">
    <property type="term" value="C:cytosol"/>
    <property type="evidence" value="ECO:0000318"/>
    <property type="project" value="GO_Central"/>
</dbReference>
<dbReference type="GO" id="GO:0005524">
    <property type="term" value="F:ATP binding"/>
    <property type="evidence" value="ECO:0007669"/>
    <property type="project" value="UniProtKB-UniRule"/>
</dbReference>
<dbReference type="GO" id="GO:0046872">
    <property type="term" value="F:metal ion binding"/>
    <property type="evidence" value="ECO:0007669"/>
    <property type="project" value="UniProtKB-KW"/>
</dbReference>
<dbReference type="GO" id="GO:0004747">
    <property type="term" value="F:ribokinase activity"/>
    <property type="evidence" value="ECO:0007669"/>
    <property type="project" value="UniProtKB-EC"/>
</dbReference>
<dbReference type="GO" id="GO:0006014">
    <property type="term" value="P:D-ribose metabolic process"/>
    <property type="evidence" value="ECO:0007669"/>
    <property type="project" value="InterPro"/>
</dbReference>
<dbReference type="CDD" id="cd01174">
    <property type="entry name" value="ribokinase"/>
    <property type="match status" value="1"/>
</dbReference>
<dbReference type="FunFam" id="3.40.1190.20:FF:000010">
    <property type="entry name" value="Ribokinase"/>
    <property type="match status" value="1"/>
</dbReference>
<dbReference type="Gene3D" id="3.40.1190.20">
    <property type="match status" value="1"/>
</dbReference>
<dbReference type="HAMAP" id="MF_01987">
    <property type="entry name" value="Ribokinase"/>
    <property type="match status" value="1"/>
</dbReference>
<dbReference type="InterPro" id="IPR011611">
    <property type="entry name" value="PfkB_dom"/>
</dbReference>
<dbReference type="InterPro" id="IPR002139">
    <property type="entry name" value="Ribo/fructo_kinase"/>
</dbReference>
<dbReference type="InterPro" id="IPR011877">
    <property type="entry name" value="Ribokinase"/>
</dbReference>
<dbReference type="InterPro" id="IPR029056">
    <property type="entry name" value="Ribokinase-like"/>
</dbReference>
<dbReference type="NCBIfam" id="TIGR02152">
    <property type="entry name" value="D_ribokin_bact"/>
    <property type="match status" value="1"/>
</dbReference>
<dbReference type="PANTHER" id="PTHR10584:SF166">
    <property type="entry name" value="RIBOKINASE"/>
    <property type="match status" value="1"/>
</dbReference>
<dbReference type="PANTHER" id="PTHR10584">
    <property type="entry name" value="SUGAR KINASE"/>
    <property type="match status" value="1"/>
</dbReference>
<dbReference type="Pfam" id="PF00294">
    <property type="entry name" value="PfkB"/>
    <property type="match status" value="1"/>
</dbReference>
<dbReference type="PRINTS" id="PR00990">
    <property type="entry name" value="RIBOKINASE"/>
</dbReference>
<dbReference type="SUPFAM" id="SSF53613">
    <property type="entry name" value="Ribokinase-like"/>
    <property type="match status" value="1"/>
</dbReference>
<sequence>MDIAVIGSNMVDLITYTNQMPKEGETLEAPAFKIGCGGKGANQAVAAAKLNSKVLMLTKVGDDIFADNTIRNLESWGINTTYVEKVPCTSSGVAPIFVNANSSNSILIIKGANKFLSPEDIDRAAEDLKKCQLIVLQLEVQLETVYHAIEFGKKHGIEVLLNPAPALRELDMSYACKCDFFVPNETELEILTGMPVDTYDHIRAAARSLVDKGLNNIIVTMGEKGALWMTRDQEVHVPAFRVNAVDTSGAGDAFIGCFAHYYVQSGDVEAAMKKAVLFAAFSVTGKGTQSSYPSIEQFNEYLSLNE</sequence>
<feature type="chain" id="PRO_0000459682" description="Deoxyribokinase">
    <location>
        <begin position="1"/>
        <end position="306"/>
    </location>
</feature>
<feature type="active site" description="Proton acceptor" evidence="2">
    <location>
        <position position="252"/>
    </location>
</feature>
<feature type="binding site" evidence="2">
    <location>
        <begin position="10"/>
        <end position="12"/>
    </location>
    <ligand>
        <name>substrate</name>
    </ligand>
</feature>
<feature type="binding site" evidence="2">
    <location>
        <begin position="38"/>
        <end position="42"/>
    </location>
    <ligand>
        <name>substrate</name>
    </ligand>
</feature>
<feature type="binding site" evidence="2">
    <location>
        <position position="139"/>
    </location>
    <ligand>
        <name>substrate</name>
    </ligand>
</feature>
<feature type="binding site" evidence="2">
    <location>
        <position position="184"/>
    </location>
    <ligand>
        <name>ATP</name>
        <dbReference type="ChEBI" id="CHEBI:30616"/>
    </ligand>
</feature>
<feature type="binding site" evidence="2">
    <location>
        <begin position="220"/>
        <end position="225"/>
    </location>
    <ligand>
        <name>ATP</name>
        <dbReference type="ChEBI" id="CHEBI:30616"/>
    </ligand>
</feature>
<feature type="binding site" evidence="2">
    <location>
        <position position="246"/>
    </location>
    <ligand>
        <name>K(+)</name>
        <dbReference type="ChEBI" id="CHEBI:29103"/>
    </ligand>
</feature>
<feature type="binding site" evidence="2">
    <location>
        <position position="248"/>
    </location>
    <ligand>
        <name>K(+)</name>
        <dbReference type="ChEBI" id="CHEBI:29103"/>
    </ligand>
</feature>
<feature type="binding site" evidence="2">
    <location>
        <begin position="251"/>
        <end position="252"/>
    </location>
    <ligand>
        <name>ATP</name>
        <dbReference type="ChEBI" id="CHEBI:30616"/>
    </ligand>
</feature>
<feature type="binding site" evidence="2">
    <location>
        <position position="252"/>
    </location>
    <ligand>
        <name>substrate</name>
    </ligand>
</feature>
<feature type="binding site" evidence="2">
    <location>
        <position position="282"/>
    </location>
    <ligand>
        <name>K(+)</name>
        <dbReference type="ChEBI" id="CHEBI:29103"/>
    </ligand>
</feature>
<feature type="binding site" evidence="2">
    <location>
        <position position="285"/>
    </location>
    <ligand>
        <name>K(+)</name>
        <dbReference type="ChEBI" id="CHEBI:29103"/>
    </ligand>
</feature>
<feature type="binding site" evidence="2">
    <location>
        <position position="287"/>
    </location>
    <ligand>
        <name>K(+)</name>
        <dbReference type="ChEBI" id="CHEBI:29103"/>
    </ligand>
</feature>
<feature type="binding site" evidence="2">
    <location>
        <position position="291"/>
    </location>
    <ligand>
        <name>K(+)</name>
        <dbReference type="ChEBI" id="CHEBI:29103"/>
    </ligand>
</feature>
<feature type="site" description="Important for substrate specificity" evidence="2">
    <location>
        <position position="10"/>
    </location>
</feature>
<proteinExistence type="evidence at protein level"/>
<protein>
    <recommendedName>
        <fullName evidence="2 5">Deoxyribokinase</fullName>
        <shortName evidence="2 6">dRK</shortName>
        <ecNumber evidence="2 4">2.7.1.229</ecNumber>
    </recommendedName>
    <alternativeName>
        <fullName evidence="2 6">ATP:2-deoxy-D-ribose 5-phosphotransferase</fullName>
    </alternativeName>
</protein>
<accession>Q7CPF5</accession>
<evidence type="ECO:0000250" key="1">
    <source>
        <dbReference type="UniProtKB" id="P0DX97"/>
    </source>
</evidence>
<evidence type="ECO:0000255" key="2">
    <source>
        <dbReference type="HAMAP-Rule" id="MF_01987"/>
    </source>
</evidence>
<evidence type="ECO:0000269" key="3">
    <source>
    </source>
</evidence>
<evidence type="ECO:0000269" key="4">
    <source>
    </source>
</evidence>
<evidence type="ECO:0000303" key="5">
    <source>
    </source>
</evidence>
<evidence type="ECO:0000305" key="6"/>
<evidence type="ECO:0000312" key="7">
    <source>
        <dbReference type="EMBL" id="AAL22651.1"/>
    </source>
</evidence>
<comment type="function">
    <text evidence="4">Catalyzes the ATP-dependent phosphorylation of 2-deoxy-D-ribose to 2-deoxy-D-ribose 5-phosphate (dRib-5P), allowing the use of deoxyribose as the sole carbon source (PubMed:4376665). Can also use D-ribose and 2-deoxy-D-ribitol, with lower efficiency (PubMed:4376665). Several ribo- and deoxyribonucleotides can replace ATP as phosphoryl donor (PubMed:4376665).</text>
</comment>
<comment type="catalytic activity">
    <reaction evidence="2 4">
        <text>2-deoxy-D-ribose + ATP = 2-deoxy-D-ribose 5-phosphate + ADP + H(+)</text>
        <dbReference type="Rhea" id="RHEA:30871"/>
        <dbReference type="ChEBI" id="CHEBI:15378"/>
        <dbReference type="ChEBI" id="CHEBI:30616"/>
        <dbReference type="ChEBI" id="CHEBI:62877"/>
        <dbReference type="ChEBI" id="CHEBI:90761"/>
        <dbReference type="ChEBI" id="CHEBI:456216"/>
        <dbReference type="EC" id="2.7.1.229"/>
    </reaction>
    <physiologicalReaction direction="left-to-right" evidence="4">
        <dbReference type="Rhea" id="RHEA:30872"/>
    </physiologicalReaction>
</comment>
<comment type="cofactor">
    <cofactor evidence="2 4">
        <name>Mg(2+)</name>
        <dbReference type="ChEBI" id="CHEBI:18420"/>
    </cofactor>
    <text evidence="4">Has an absolute requirement for divalent cations which is best satisfied by Mg(2+) (PubMed:4376665). Can also use Co(2+), Cd(2+), Mn(2+), Ni(2+), Zn(2+) and Cu(2+), with lower efficiency (PubMed:4376665).</text>
</comment>
<comment type="activity regulation">
    <text evidence="4">Activity is stimulated by certain monovalent cations, including NH(4+), Cs(+), Rb(+) and K(+) (PubMed:4376665). Inhibited by Na(+) and Li(+) (PubMed:4376665).</text>
</comment>
<comment type="biophysicochemical properties">
    <kinetics>
        <KM evidence="4">0.1 mM for 2-deoxy-D-ribose</KM>
        <KM evidence="4">2 mM for D-ribose</KM>
        <KM evidence="4">33.3 mM for 2-deoxy-D-ribitol</KM>
        <KM evidence="4">0.5 mM for ATP</KM>
    </kinetics>
    <phDependence>
        <text evidence="4">Optimum pH is 6.8-7.2.</text>
    </phDependence>
</comment>
<comment type="subunit">
    <text evidence="2 4">Homodimer.</text>
</comment>
<comment type="subcellular location">
    <subcellularLocation>
        <location evidence="2">Cytoplasm</location>
    </subcellularLocation>
</comment>
<comment type="induction">
    <text evidence="3 4">Part of the deoKPX operon (PubMed:14526015). Induced by 2-deoxy-D-ribose (PubMed:14526015, PubMed:4376665). Negatively regulated by DeoQ as well as by DeoR (PubMed:14526015).</text>
</comment>
<comment type="domain">
    <text evidence="1">Met-10, which corresponds to Asn-14 in E.coli ribokinase, is a key residue differentiating ribose and deoxyribose.</text>
</comment>
<comment type="miscellaneous">
    <text evidence="3">Located in the deoQKPX locus, involved in 2-deoxy-D-ribose utilization (PubMed:14526015). This locus is absent in E.coli K12 (PubMed:14526015).</text>
</comment>
<comment type="similarity">
    <text evidence="2">Belongs to the carbohydrate kinase PfkB family. Deoxyribokinase subfamily.</text>
</comment>
<keyword id="KW-0067">ATP-binding</keyword>
<keyword id="KW-0119">Carbohydrate metabolism</keyword>
<keyword id="KW-0963">Cytoplasm</keyword>
<keyword id="KW-0418">Kinase</keyword>
<keyword id="KW-0460">Magnesium</keyword>
<keyword id="KW-0479">Metal-binding</keyword>
<keyword id="KW-0547">Nucleotide-binding</keyword>
<keyword id="KW-0630">Potassium</keyword>
<keyword id="KW-1185">Reference proteome</keyword>
<keyword id="KW-0808">Transferase</keyword>